<proteinExistence type="evidence at protein level"/>
<keyword id="KW-0274">FAD</keyword>
<keyword id="KW-0285">Flavoprotein</keyword>
<keyword id="KW-0496">Mitochondrion</keyword>
<keyword id="KW-0560">Oxidoreductase</keyword>
<keyword id="KW-1185">Reference proteome</keyword>
<keyword id="KW-0809">Transit peptide</keyword>
<gene>
    <name type="primary">2MBCD</name>
    <name type="synonym">IVD1</name>
    <name type="ORF">PGSC0003DMG400026901</name>
</gene>
<protein>
    <recommendedName>
        <fullName>2-methylacyl-CoA dehydrogenase, mitochondrial</fullName>
        <ecNumber evidence="3">1.3.8.5</ecNumber>
    </recommendedName>
    <alternativeName>
        <fullName>2-methylbutanoyl-CoA dehydrogenase</fullName>
    </alternativeName>
    <alternativeName>
        <fullName>2-methylbutyryl-CoA dehydrogenase</fullName>
        <shortName>2MBCD</shortName>
    </alternativeName>
    <alternativeName>
        <fullName>Isovaleryl-CoA dehydrogenase 1</fullName>
        <shortName>St-IVD1</shortName>
    </alternativeName>
</protein>
<comment type="function">
    <text evidence="3">Short/branched-chain acyl-CoA dehydrogenase (SBCAD). Uses 2-methylbutanoyl-CoA as substrate. Minor activity with the straight-chain substrates, butanoyl-CoA, valeryl-CoA, hexanoyl-CoA, and octanoyl-CoA but no activity with isovaleryl-CoA.</text>
</comment>
<comment type="catalytic activity">
    <reaction evidence="3">
        <text>2-methylbutanoyl-CoA + oxidized [electron-transfer flavoprotein] + H(+) = (2E)-2-methylbut-2-enoyl-CoA + reduced [electron-transfer flavoprotein]</text>
        <dbReference type="Rhea" id="RHEA:43780"/>
        <dbReference type="Rhea" id="RHEA-COMP:10685"/>
        <dbReference type="Rhea" id="RHEA-COMP:10686"/>
        <dbReference type="ChEBI" id="CHEBI:15378"/>
        <dbReference type="ChEBI" id="CHEBI:57336"/>
        <dbReference type="ChEBI" id="CHEBI:57337"/>
        <dbReference type="ChEBI" id="CHEBI:57692"/>
        <dbReference type="ChEBI" id="CHEBI:58307"/>
        <dbReference type="EC" id="1.3.8.5"/>
    </reaction>
</comment>
<comment type="cofactor">
    <cofactor evidence="1">
        <name>FAD</name>
        <dbReference type="ChEBI" id="CHEBI:57692"/>
    </cofactor>
</comment>
<comment type="biophysicochemical properties">
    <kinetics>
        <KM evidence="3">1 uM for 2-methylbutanoyl-CoA</KM>
        <text>kcat is 1.77 sec(-1) per tetramer for 2-methylbutanoyl-CoA.</text>
    </kinetics>
</comment>
<comment type="subunit">
    <text evidence="3">Homotetramer.</text>
</comment>
<comment type="subcellular location">
    <subcellularLocation>
        <location evidence="2">Mitochondrion</location>
    </subcellularLocation>
</comment>
<comment type="tissue specificity">
    <text evidence="2">Expressed in flowers.</text>
</comment>
<comment type="miscellaneous">
    <text evidence="5 6">Due to a high homology with IVD, this protein was initially thought to be a second copy of the isovaleryl-CoA dehydrogenase (PubMed:11231285), but based on 3D-structure modeling and mutagenesis of the human isovaleryl-CoA dehydrogenase, Val-116, Val-120, Val-124, Met-389 and Ala-393 were shown to provide the substrate specificity for 2-methylbutanoyl-CoA (PubMed:15574432).</text>
</comment>
<comment type="similarity">
    <text evidence="4">Belongs to the acyl-CoA dehydrogenase family.</text>
</comment>
<name>MBCD_SOLTU</name>
<feature type="transit peptide" description="Mitochondrion" evidence="4">
    <location>
        <begin position="1"/>
        <end position="25"/>
    </location>
</feature>
<feature type="chain" id="PRO_0000000536" description="2-methylacyl-CoA dehydrogenase, mitochondrial">
    <location>
        <begin position="26"/>
        <end position="412"/>
    </location>
</feature>
<feature type="active site" description="Proton acceptor" evidence="1">
    <location>
        <position position="273"/>
    </location>
</feature>
<feature type="binding site" evidence="1">
    <location>
        <begin position="154"/>
        <end position="163"/>
    </location>
    <ligand>
        <name>FAD</name>
        <dbReference type="ChEBI" id="CHEBI:57692"/>
    </ligand>
</feature>
<feature type="binding site" evidence="1">
    <location>
        <position position="163"/>
    </location>
    <ligand>
        <name>substrate</name>
    </ligand>
</feature>
<feature type="binding site" evidence="1">
    <location>
        <begin position="187"/>
        <end position="189"/>
    </location>
    <ligand>
        <name>FAD</name>
        <dbReference type="ChEBI" id="CHEBI:57692"/>
    </ligand>
</feature>
<feature type="binding site" evidence="1">
    <location>
        <begin position="209"/>
        <end position="210"/>
    </location>
    <ligand>
        <name>substrate</name>
    </ligand>
</feature>
<feature type="binding site" evidence="1">
    <location>
        <position position="264"/>
    </location>
    <ligand>
        <name>substrate</name>
    </ligand>
</feature>
<feature type="binding site" evidence="1">
    <location>
        <begin position="271"/>
        <end position="274"/>
    </location>
    <ligand>
        <name>substrate</name>
    </ligand>
</feature>
<feature type="binding site" evidence="1">
    <location>
        <position position="299"/>
    </location>
    <ligand>
        <name>FAD</name>
        <dbReference type="ChEBI" id="CHEBI:57692"/>
    </ligand>
</feature>
<feature type="binding site" evidence="1">
    <location>
        <position position="310"/>
    </location>
    <ligand>
        <name>FAD</name>
        <dbReference type="ChEBI" id="CHEBI:57692"/>
    </ligand>
</feature>
<feature type="binding site" evidence="1">
    <location>
        <begin position="367"/>
        <end position="371"/>
    </location>
    <ligand>
        <name>FAD</name>
        <dbReference type="ChEBI" id="CHEBI:57692"/>
    </ligand>
</feature>
<feature type="binding site" evidence="1">
    <location>
        <begin position="394"/>
        <end position="395"/>
    </location>
    <ligand>
        <name>substrate</name>
    </ligand>
</feature>
<feature type="binding site" evidence="1">
    <location>
        <begin position="396"/>
        <end position="398"/>
    </location>
    <ligand>
        <name>FAD</name>
        <dbReference type="ChEBI" id="CHEBI:57692"/>
    </ligand>
</feature>
<feature type="sequence conflict" description="In Ref. 1; CAC08233." evidence="4" ref="1">
    <original>VKS</original>
    <variation>AKN</variation>
    <location>
        <begin position="15"/>
        <end position="17"/>
    </location>
</feature>
<feature type="sequence conflict" description="In Ref. 1; CAC08233." evidence="4" ref="1">
    <original>N</original>
    <variation>K</variation>
    <location>
        <position position="252"/>
    </location>
</feature>
<organism evidence="7">
    <name type="scientific">Solanum tuberosum</name>
    <name type="common">Potato</name>
    <dbReference type="NCBI Taxonomy" id="4113"/>
    <lineage>
        <taxon>Eukaryota</taxon>
        <taxon>Viridiplantae</taxon>
        <taxon>Streptophyta</taxon>
        <taxon>Embryophyta</taxon>
        <taxon>Tracheophyta</taxon>
        <taxon>Spermatophyta</taxon>
        <taxon>Magnoliopsida</taxon>
        <taxon>eudicotyledons</taxon>
        <taxon>Gunneridae</taxon>
        <taxon>Pentapetalae</taxon>
        <taxon>asterids</taxon>
        <taxon>lamiids</taxon>
        <taxon>Solanales</taxon>
        <taxon>Solanaceae</taxon>
        <taxon>Solanoideae</taxon>
        <taxon>Solaneae</taxon>
        <taxon>Solanum</taxon>
    </lineage>
</organism>
<evidence type="ECO:0000250" key="1">
    <source>
        <dbReference type="UniProtKB" id="P26440"/>
    </source>
</evidence>
<evidence type="ECO:0000269" key="2">
    <source>
    </source>
</evidence>
<evidence type="ECO:0000269" key="3">
    <source>
    </source>
</evidence>
<evidence type="ECO:0000305" key="4"/>
<evidence type="ECO:0000305" key="5">
    <source>
    </source>
</evidence>
<evidence type="ECO:0000305" key="6">
    <source>
    </source>
</evidence>
<evidence type="ECO:0000312" key="7">
    <source>
        <dbReference type="EMBL" id="CAC08233.1"/>
    </source>
</evidence>
<reference evidence="4" key="1">
    <citation type="journal article" date="2001" name="Eur. J. Biochem.">
        <title>Purification, characterization and cloning of isovaleryl-CoA dehydrogenase from higher plant mitochondria.</title>
        <authorList>
            <person name="Faivre-Nitschke S.E."/>
            <person name="Couee I."/>
            <person name="Vermel M."/>
            <person name="Grienenberger J.-M."/>
            <person name="Gualberto J.M."/>
        </authorList>
    </citation>
    <scope>NUCLEOTIDE SEQUENCE [MRNA]</scope>
    <scope>SUBCELLULAR LOCATION</scope>
    <scope>TISSUE SPECIFICITY</scope>
    <source>
        <strain>cv. Bintje</strain>
        <tissue>Tuber</tissue>
    </source>
</reference>
<reference key="2">
    <citation type="journal article" date="2011" name="Nature">
        <title>Genome sequence and analysis of the tuber crop potato.</title>
        <authorList>
            <consortium name="The Potato Genome Sequencing Consortium"/>
        </authorList>
    </citation>
    <scope>NUCLEOTIDE SEQUENCE [LARGE SCALE GENOMIC DNA]</scope>
    <source>
        <strain>cv. DM1-3 516 R44</strain>
    </source>
</reference>
<reference key="3">
    <citation type="journal article" date="2005" name="J. Biol. Chem.">
        <title>Convergent evolution of a 2-methylbutyryl-CoA dehydrogenase from isovaleryl-CoA dehydrogenase in Solanum tuberosum.</title>
        <authorList>
            <person name="Goetzman E.S."/>
            <person name="Mohsen A.W."/>
            <person name="Prasad K."/>
            <person name="Vockley J."/>
        </authorList>
    </citation>
    <scope>FUNCTION</scope>
    <scope>CATALYTIC ACTIVITY</scope>
    <scope>BIOPHYSICOCHEMICAL PROPERTIES</scope>
    <scope>SUBUNIT</scope>
    <scope>SUBSTRATE SPECIFICITY</scope>
    <scope>3D-STRUCTURE MODELING</scope>
</reference>
<accession>Q9FS88</accession>
<accession>M1CK01</accession>
<sequence length="412" mass="45086">MHKLFAVRSLSSAIVKSFKSLQNQQAAFSTSLLLDDTQKQFKESVAKFAQENIAPYAEKIDRTNSFPKEINLWKLMGDFNLHGITAPEEYGGLNLGYLYHCIALEEISRASGAVAVSYGVQSNVCINQLVRNGTPDQKQKYLPKLISGDHIGALAMSEPNAGSDVVSMKCRADRVDGGYVLNGNKMWCTNGPVANTLIVYAKTDTTAGSKGITAFIIEKEMPGFSTAQKLDKLGMRGSDTCELVFENCFVPNENVLGQEGKGVYVLMSGLDLERLVLAAGPVGIMQACMDIVIPYVRQREQFGRPIGEFQLIQGKLADMYTALQSSRSYVYAVAKDCDNGKIDPKDCSGTILLAAERATQVALQAIQCLGGNGYINEYPTGRLLRDAKMYEIAAGTSEIRRLVIGRELFKHQ</sequence>
<dbReference type="EC" id="1.3.8.5" evidence="3"/>
<dbReference type="EMBL" id="AJ278987">
    <property type="protein sequence ID" value="CAC08233.1"/>
    <property type="molecule type" value="mRNA"/>
</dbReference>
<dbReference type="RefSeq" id="NP_001275043.1">
    <property type="nucleotide sequence ID" value="NM_001288114.1"/>
</dbReference>
<dbReference type="SMR" id="Q9FS88"/>
<dbReference type="STRING" id="4113.Q9FS88"/>
<dbReference type="PaxDb" id="4113-PGSC0003DMT400069152"/>
<dbReference type="EnsemblPlants" id="PGSC0003DMT400069152">
    <property type="protein sequence ID" value="PGSC0003DMT400069152"/>
    <property type="gene ID" value="PGSC0003DMG400026901"/>
</dbReference>
<dbReference type="GeneID" id="102589539"/>
<dbReference type="Gramene" id="PGSC0003DMT400069152">
    <property type="protein sequence ID" value="PGSC0003DMT400069152"/>
    <property type="gene ID" value="PGSC0003DMG400026901"/>
</dbReference>
<dbReference type="KEGG" id="sot:102589539"/>
<dbReference type="eggNOG" id="KOG0141">
    <property type="taxonomic scope" value="Eukaryota"/>
</dbReference>
<dbReference type="HOGENOM" id="CLU_018204_0_1_1"/>
<dbReference type="InParanoid" id="Q9FS88"/>
<dbReference type="OMA" id="YNVERMM"/>
<dbReference type="OrthoDB" id="9988775at2759"/>
<dbReference type="SABIO-RK" id="Q9FS88"/>
<dbReference type="Proteomes" id="UP000011115">
    <property type="component" value="Unassembled WGS sequence"/>
</dbReference>
<dbReference type="GO" id="GO:0005739">
    <property type="term" value="C:mitochondrion"/>
    <property type="evidence" value="ECO:0000318"/>
    <property type="project" value="GO_Central"/>
</dbReference>
<dbReference type="GO" id="GO:0008470">
    <property type="term" value="F:3-methylbutanoyl-CoA dehydrogenase activity"/>
    <property type="evidence" value="ECO:0000318"/>
    <property type="project" value="GO_Central"/>
</dbReference>
<dbReference type="GO" id="GO:0050660">
    <property type="term" value="F:flavin adenine dinucleotide binding"/>
    <property type="evidence" value="ECO:0007669"/>
    <property type="project" value="InterPro"/>
</dbReference>
<dbReference type="GO" id="GO:0003853">
    <property type="term" value="F:short-chain 2-methyl fatty acyl-CoA dehydrogenase activity"/>
    <property type="evidence" value="ECO:0000314"/>
    <property type="project" value="UniProtKB"/>
</dbReference>
<dbReference type="GO" id="GO:1902192">
    <property type="term" value="P:2-methylbut-2-enoyl-CoA(4-) metabolic process"/>
    <property type="evidence" value="ECO:0000314"/>
    <property type="project" value="UniProtKB"/>
</dbReference>
<dbReference type="GO" id="GO:1902190">
    <property type="term" value="P:2-methylbutanoyl-CoA(4-) catabolic process"/>
    <property type="evidence" value="ECO:0000314"/>
    <property type="project" value="UniProtKB"/>
</dbReference>
<dbReference type="GO" id="GO:0006552">
    <property type="term" value="P:L-leucine catabolic process"/>
    <property type="evidence" value="ECO:0000318"/>
    <property type="project" value="GO_Central"/>
</dbReference>
<dbReference type="CDD" id="cd01156">
    <property type="entry name" value="IVD"/>
    <property type="match status" value="1"/>
</dbReference>
<dbReference type="FunFam" id="1.10.540.10:FF:000007">
    <property type="entry name" value="Isovaleryl-CoA dehydrogenase, mitochondrial"/>
    <property type="match status" value="1"/>
</dbReference>
<dbReference type="FunFam" id="2.40.110.10:FF:000004">
    <property type="entry name" value="Isovaleryl-CoA dehydrogenase, mitochondrial"/>
    <property type="match status" value="1"/>
</dbReference>
<dbReference type="FunFam" id="1.20.140.10:FF:000003">
    <property type="entry name" value="isovaleryl-CoA dehydrogenase, mitochondrial"/>
    <property type="match status" value="1"/>
</dbReference>
<dbReference type="Gene3D" id="1.10.540.10">
    <property type="entry name" value="Acyl-CoA dehydrogenase/oxidase, N-terminal domain"/>
    <property type="match status" value="1"/>
</dbReference>
<dbReference type="Gene3D" id="2.40.110.10">
    <property type="entry name" value="Butyryl-CoA Dehydrogenase, subunit A, domain 2"/>
    <property type="match status" value="1"/>
</dbReference>
<dbReference type="Gene3D" id="1.20.140.10">
    <property type="entry name" value="Butyryl-CoA Dehydrogenase, subunit A, domain 3"/>
    <property type="match status" value="1"/>
</dbReference>
<dbReference type="InterPro" id="IPR006089">
    <property type="entry name" value="Acyl-CoA_DH_CS"/>
</dbReference>
<dbReference type="InterPro" id="IPR006091">
    <property type="entry name" value="Acyl-CoA_Oxase/DH_mid-dom"/>
</dbReference>
<dbReference type="InterPro" id="IPR046373">
    <property type="entry name" value="Acyl-CoA_Oxase/DH_mid-dom_sf"/>
</dbReference>
<dbReference type="InterPro" id="IPR036250">
    <property type="entry name" value="AcylCo_DH-like_C"/>
</dbReference>
<dbReference type="InterPro" id="IPR009075">
    <property type="entry name" value="AcylCo_DH/oxidase_C"/>
</dbReference>
<dbReference type="InterPro" id="IPR013786">
    <property type="entry name" value="AcylCoA_DH/ox_N"/>
</dbReference>
<dbReference type="InterPro" id="IPR037069">
    <property type="entry name" value="AcylCoA_DH/ox_N_sf"/>
</dbReference>
<dbReference type="InterPro" id="IPR009100">
    <property type="entry name" value="AcylCoA_DH/oxidase_NM_dom_sf"/>
</dbReference>
<dbReference type="InterPro" id="IPR034183">
    <property type="entry name" value="IVD"/>
</dbReference>
<dbReference type="PANTHER" id="PTHR43884:SF27">
    <property type="entry name" value="2-METHYLACYL-COA DEHYDROGENASE, MITOCHONDRIAL"/>
    <property type="match status" value="1"/>
</dbReference>
<dbReference type="PANTHER" id="PTHR43884">
    <property type="entry name" value="ACYL-COA DEHYDROGENASE"/>
    <property type="match status" value="1"/>
</dbReference>
<dbReference type="Pfam" id="PF00441">
    <property type="entry name" value="Acyl-CoA_dh_1"/>
    <property type="match status" value="1"/>
</dbReference>
<dbReference type="Pfam" id="PF02770">
    <property type="entry name" value="Acyl-CoA_dh_M"/>
    <property type="match status" value="1"/>
</dbReference>
<dbReference type="Pfam" id="PF02771">
    <property type="entry name" value="Acyl-CoA_dh_N"/>
    <property type="match status" value="1"/>
</dbReference>
<dbReference type="PIRSF" id="PIRSF016578">
    <property type="entry name" value="HsaA"/>
    <property type="match status" value="1"/>
</dbReference>
<dbReference type="SUPFAM" id="SSF47203">
    <property type="entry name" value="Acyl-CoA dehydrogenase C-terminal domain-like"/>
    <property type="match status" value="1"/>
</dbReference>
<dbReference type="SUPFAM" id="SSF56645">
    <property type="entry name" value="Acyl-CoA dehydrogenase NM domain-like"/>
    <property type="match status" value="1"/>
</dbReference>
<dbReference type="PROSITE" id="PS00072">
    <property type="entry name" value="ACYL_COA_DH_1"/>
    <property type="match status" value="1"/>
</dbReference>
<dbReference type="PROSITE" id="PS00073">
    <property type="entry name" value="ACYL_COA_DH_2"/>
    <property type="match status" value="1"/>
</dbReference>